<dbReference type="EC" id="2.7.1.71" evidence="1"/>
<dbReference type="EMBL" id="CP000728">
    <property type="protein sequence ID" value="ABS40129.1"/>
    <property type="molecule type" value="Genomic_DNA"/>
</dbReference>
<dbReference type="RefSeq" id="WP_012099926.1">
    <property type="nucleotide sequence ID" value="NC_009699.1"/>
</dbReference>
<dbReference type="SMR" id="A7GEL1"/>
<dbReference type="KEGG" id="cbf:CLI_1963"/>
<dbReference type="HOGENOM" id="CLU_057607_4_0_9"/>
<dbReference type="UniPathway" id="UPA00053">
    <property type="reaction ID" value="UER00088"/>
</dbReference>
<dbReference type="Proteomes" id="UP000002410">
    <property type="component" value="Chromosome"/>
</dbReference>
<dbReference type="GO" id="GO:0005829">
    <property type="term" value="C:cytosol"/>
    <property type="evidence" value="ECO:0007669"/>
    <property type="project" value="TreeGrafter"/>
</dbReference>
<dbReference type="GO" id="GO:0005524">
    <property type="term" value="F:ATP binding"/>
    <property type="evidence" value="ECO:0007669"/>
    <property type="project" value="UniProtKB-UniRule"/>
</dbReference>
<dbReference type="GO" id="GO:0000287">
    <property type="term" value="F:magnesium ion binding"/>
    <property type="evidence" value="ECO:0007669"/>
    <property type="project" value="UniProtKB-UniRule"/>
</dbReference>
<dbReference type="GO" id="GO:0004765">
    <property type="term" value="F:shikimate kinase activity"/>
    <property type="evidence" value="ECO:0007669"/>
    <property type="project" value="UniProtKB-UniRule"/>
</dbReference>
<dbReference type="GO" id="GO:0008652">
    <property type="term" value="P:amino acid biosynthetic process"/>
    <property type="evidence" value="ECO:0007669"/>
    <property type="project" value="UniProtKB-KW"/>
</dbReference>
<dbReference type="GO" id="GO:0009073">
    <property type="term" value="P:aromatic amino acid family biosynthetic process"/>
    <property type="evidence" value="ECO:0007669"/>
    <property type="project" value="UniProtKB-KW"/>
</dbReference>
<dbReference type="GO" id="GO:0009423">
    <property type="term" value="P:chorismate biosynthetic process"/>
    <property type="evidence" value="ECO:0007669"/>
    <property type="project" value="UniProtKB-UniRule"/>
</dbReference>
<dbReference type="CDD" id="cd00464">
    <property type="entry name" value="SK"/>
    <property type="match status" value="1"/>
</dbReference>
<dbReference type="FunFam" id="3.40.50.300:FF:002322">
    <property type="entry name" value="Shikimate kinase"/>
    <property type="match status" value="1"/>
</dbReference>
<dbReference type="Gene3D" id="3.40.50.300">
    <property type="entry name" value="P-loop containing nucleotide triphosphate hydrolases"/>
    <property type="match status" value="1"/>
</dbReference>
<dbReference type="HAMAP" id="MF_00109">
    <property type="entry name" value="Shikimate_kinase"/>
    <property type="match status" value="1"/>
</dbReference>
<dbReference type="InterPro" id="IPR027417">
    <property type="entry name" value="P-loop_NTPase"/>
</dbReference>
<dbReference type="InterPro" id="IPR031322">
    <property type="entry name" value="Shikimate/glucono_kinase"/>
</dbReference>
<dbReference type="InterPro" id="IPR000623">
    <property type="entry name" value="Shikimate_kinase/TSH1"/>
</dbReference>
<dbReference type="PANTHER" id="PTHR21087">
    <property type="entry name" value="SHIKIMATE KINASE"/>
    <property type="match status" value="1"/>
</dbReference>
<dbReference type="PANTHER" id="PTHR21087:SF16">
    <property type="entry name" value="SHIKIMATE KINASE 1, CHLOROPLASTIC"/>
    <property type="match status" value="1"/>
</dbReference>
<dbReference type="Pfam" id="PF01202">
    <property type="entry name" value="SKI"/>
    <property type="match status" value="1"/>
</dbReference>
<dbReference type="PRINTS" id="PR01100">
    <property type="entry name" value="SHIKIMTKNASE"/>
</dbReference>
<dbReference type="SUPFAM" id="SSF52540">
    <property type="entry name" value="P-loop containing nucleoside triphosphate hydrolases"/>
    <property type="match status" value="1"/>
</dbReference>
<proteinExistence type="inferred from homology"/>
<keyword id="KW-0028">Amino-acid biosynthesis</keyword>
<keyword id="KW-0057">Aromatic amino acid biosynthesis</keyword>
<keyword id="KW-0067">ATP-binding</keyword>
<keyword id="KW-0963">Cytoplasm</keyword>
<keyword id="KW-0418">Kinase</keyword>
<keyword id="KW-0460">Magnesium</keyword>
<keyword id="KW-0479">Metal-binding</keyword>
<keyword id="KW-0547">Nucleotide-binding</keyword>
<keyword id="KW-0808">Transferase</keyword>
<accession>A7GEL1</accession>
<comment type="function">
    <text evidence="1">Catalyzes the specific phosphorylation of the 3-hydroxyl group of shikimic acid using ATP as a cosubstrate.</text>
</comment>
<comment type="catalytic activity">
    <reaction evidence="1">
        <text>shikimate + ATP = 3-phosphoshikimate + ADP + H(+)</text>
        <dbReference type="Rhea" id="RHEA:13121"/>
        <dbReference type="ChEBI" id="CHEBI:15378"/>
        <dbReference type="ChEBI" id="CHEBI:30616"/>
        <dbReference type="ChEBI" id="CHEBI:36208"/>
        <dbReference type="ChEBI" id="CHEBI:145989"/>
        <dbReference type="ChEBI" id="CHEBI:456216"/>
        <dbReference type="EC" id="2.7.1.71"/>
    </reaction>
</comment>
<comment type="cofactor">
    <cofactor evidence="1">
        <name>Mg(2+)</name>
        <dbReference type="ChEBI" id="CHEBI:18420"/>
    </cofactor>
    <text evidence="1">Binds 1 Mg(2+) ion per subunit.</text>
</comment>
<comment type="pathway">
    <text evidence="1">Metabolic intermediate biosynthesis; chorismate biosynthesis; chorismate from D-erythrose 4-phosphate and phosphoenolpyruvate: step 5/7.</text>
</comment>
<comment type="subunit">
    <text evidence="1">Monomer.</text>
</comment>
<comment type="subcellular location">
    <subcellularLocation>
        <location evidence="1">Cytoplasm</location>
    </subcellularLocation>
</comment>
<comment type="similarity">
    <text evidence="1">Belongs to the shikimate kinase family.</text>
</comment>
<evidence type="ECO:0000255" key="1">
    <source>
        <dbReference type="HAMAP-Rule" id="MF_00109"/>
    </source>
</evidence>
<reference key="1">
    <citation type="submission" date="2007-06" db="EMBL/GenBank/DDBJ databases">
        <authorList>
            <person name="Brinkac L.M."/>
            <person name="Daugherty S."/>
            <person name="Dodson R.J."/>
            <person name="Madupu R."/>
            <person name="Brown J.L."/>
            <person name="Bruce D."/>
            <person name="Detter C."/>
            <person name="Munk C."/>
            <person name="Smith L.A."/>
            <person name="Smith T.J."/>
            <person name="White O."/>
            <person name="Brettin T.S."/>
        </authorList>
    </citation>
    <scope>NUCLEOTIDE SEQUENCE [LARGE SCALE GENOMIC DNA]</scope>
    <source>
        <strain>Langeland / NCTC 10281 / Type F</strain>
    </source>
</reference>
<gene>
    <name evidence="1" type="primary">aroK</name>
    <name type="ordered locus">CLI_1963</name>
</gene>
<protein>
    <recommendedName>
        <fullName evidence="1">Shikimate kinase</fullName>
        <shortName evidence="1">SK</shortName>
        <ecNumber evidence="1">2.7.1.71</ecNumber>
    </recommendedName>
</protein>
<feature type="chain" id="PRO_1000094383" description="Shikimate kinase">
    <location>
        <begin position="1"/>
        <end position="170"/>
    </location>
</feature>
<feature type="binding site" evidence="1">
    <location>
        <begin position="11"/>
        <end position="16"/>
    </location>
    <ligand>
        <name>ATP</name>
        <dbReference type="ChEBI" id="CHEBI:30616"/>
    </ligand>
</feature>
<feature type="binding site" evidence="1">
    <location>
        <position position="15"/>
    </location>
    <ligand>
        <name>Mg(2+)</name>
        <dbReference type="ChEBI" id="CHEBI:18420"/>
    </ligand>
</feature>
<feature type="binding site" evidence="1">
    <location>
        <position position="33"/>
    </location>
    <ligand>
        <name>substrate</name>
    </ligand>
</feature>
<feature type="binding site" evidence="1">
    <location>
        <position position="57"/>
    </location>
    <ligand>
        <name>substrate</name>
    </ligand>
</feature>
<feature type="binding site" evidence="1">
    <location>
        <position position="79"/>
    </location>
    <ligand>
        <name>substrate</name>
    </ligand>
</feature>
<feature type="binding site" evidence="1">
    <location>
        <position position="119"/>
    </location>
    <ligand>
        <name>ATP</name>
        <dbReference type="ChEBI" id="CHEBI:30616"/>
    </ligand>
</feature>
<feature type="binding site" evidence="1">
    <location>
        <position position="137"/>
    </location>
    <ligand>
        <name>substrate</name>
    </ligand>
</feature>
<sequence length="170" mass="20104">MENIVLIGMPLSGKSTLGRELSKILKYDLIDTDTLIEEMEDKSIKEIFKIYGEDYFREKELEIINKFKKESNKVISTGGGLPIYNKNIYELKKIGFTVYLKVPLEELIKRMVKKEYDTRPLLKNNDTKFLEEMYKNRIEIYEKAHTIICNTNYEESLITIVRAYKKWKGI</sequence>
<name>AROK_CLOBL</name>
<organism>
    <name type="scientific">Clostridium botulinum (strain Langeland / NCTC 10281 / Type F)</name>
    <dbReference type="NCBI Taxonomy" id="441772"/>
    <lineage>
        <taxon>Bacteria</taxon>
        <taxon>Bacillati</taxon>
        <taxon>Bacillota</taxon>
        <taxon>Clostridia</taxon>
        <taxon>Eubacteriales</taxon>
        <taxon>Clostridiaceae</taxon>
        <taxon>Clostridium</taxon>
    </lineage>
</organism>